<proteinExistence type="predicted"/>
<dbReference type="EMBL" id="EF432053">
    <property type="protein sequence ID" value="ABP73435.1"/>
    <property type="molecule type" value="Genomic_DNA"/>
</dbReference>
<dbReference type="RefSeq" id="YP_001210349.1">
    <property type="nucleotide sequence ID" value="NC_009452.1"/>
</dbReference>
<dbReference type="GeneID" id="5129808"/>
<dbReference type="KEGG" id="vg:5129808"/>
<dbReference type="Proteomes" id="UP000000513">
    <property type="component" value="Segment"/>
</dbReference>
<dbReference type="GO" id="GO:0033644">
    <property type="term" value="C:host cell membrane"/>
    <property type="evidence" value="ECO:0007669"/>
    <property type="project" value="UniProtKB-SubCell"/>
</dbReference>
<dbReference type="GO" id="GO:0016020">
    <property type="term" value="C:membrane"/>
    <property type="evidence" value="ECO:0007669"/>
    <property type="project" value="UniProtKB-KW"/>
</dbReference>
<name>Y346_ABVP</name>
<evidence type="ECO:0000255" key="1"/>
<evidence type="ECO:0000256" key="2">
    <source>
        <dbReference type="SAM" id="MobiDB-lite"/>
    </source>
</evidence>
<evidence type="ECO:0000305" key="3"/>
<feature type="chain" id="PRO_0000384868" description="Putative transmembrane protein ORF346">
    <location>
        <begin position="1"/>
        <end position="346"/>
    </location>
</feature>
<feature type="transmembrane region" description="Helical" evidence="1">
    <location>
        <begin position="67"/>
        <end position="87"/>
    </location>
</feature>
<feature type="transmembrane region" description="Helical" evidence="1">
    <location>
        <begin position="104"/>
        <end position="124"/>
    </location>
</feature>
<feature type="transmembrane region" description="Helical" evidence="1">
    <location>
        <begin position="134"/>
        <end position="154"/>
    </location>
</feature>
<feature type="transmembrane region" description="Helical" evidence="1">
    <location>
        <begin position="156"/>
        <end position="176"/>
    </location>
</feature>
<feature type="transmembrane region" description="Helical" evidence="1">
    <location>
        <begin position="181"/>
        <end position="201"/>
    </location>
</feature>
<feature type="transmembrane region" description="Helical" evidence="1">
    <location>
        <begin position="219"/>
        <end position="241"/>
    </location>
</feature>
<feature type="region of interest" description="Disordered" evidence="2">
    <location>
        <begin position="294"/>
        <end position="346"/>
    </location>
</feature>
<feature type="compositionally biased region" description="Gly residues" evidence="2">
    <location>
        <begin position="302"/>
        <end position="346"/>
    </location>
</feature>
<keyword id="KW-1043">Host membrane</keyword>
<keyword id="KW-0472">Membrane</keyword>
<keyword id="KW-1185">Reference proteome</keyword>
<keyword id="KW-0812">Transmembrane</keyword>
<keyword id="KW-1133">Transmembrane helix</keyword>
<organism>
    <name type="scientific">Acidianus bottle-shaped virus (isolate Italy/Pozzuoli)</name>
    <name type="common">ABV</name>
    <dbReference type="NCBI Taxonomy" id="654911"/>
    <lineage>
        <taxon>Viruses</taxon>
        <taxon>Viruses incertae sedis</taxon>
        <taxon>Ampullaviridae</taxon>
        <taxon>Bottigliavirus</taxon>
        <taxon>Bottigliavirus ABV</taxon>
    </lineage>
</organism>
<accession>A4ZUD1</accession>
<gene>
    <name type="ORF">ORF346</name>
</gene>
<sequence length="346" mass="35631">MSCVSQSAGSLPPLCQWSGLEPICKIPPSQQFQQIHCPLITKHRSSKLCDLLPPGVTDSIYDFLANLPIILLFVASVPARFIYCIVYNFLLNFDQFILGIEYSIINPILDFFTAPLVYLAVGLTDGENNSAFSPPYLIGVLTDACLPGIVSGIYQAIGDIFYTIGYGIGFILGLFIDLYDIILYSICTLVTFGLTFGLCLSYDIVGIFKGAGGLKFTIYPFSFLAGLLQNYINCGCVLGSYPTAYIILCLNFGGSCPSCCPCGVGFTPPACPAIPNGTPPSPVNLSVTGQGCVSEYPHSENGSGGSGGSGSGSGSGGSGSGGNSGSGGSGSGSSGSGGNSGSGNNG</sequence>
<organismHost>
    <name type="scientific">Acidianus convivator</name>
    <dbReference type="NCBI Taxonomy" id="269667"/>
</organismHost>
<comment type="subcellular location">
    <subcellularLocation>
        <location evidence="3">Host membrane</location>
        <topology evidence="3">Multi-pass membrane protein</topology>
    </subcellularLocation>
</comment>
<reference key="1">
    <citation type="journal article" date="2007" name="Virology">
        <title>Genome of the Acidianus bottle-shaped virus and insights into the replication and packaging mechanisms.</title>
        <authorList>
            <person name="Peng X."/>
            <person name="Basta T."/>
            <person name="Haring M."/>
            <person name="Garrett R.A."/>
            <person name="Prangishvili D."/>
        </authorList>
    </citation>
    <scope>NUCLEOTIDE SEQUENCE [GENOMIC DNA]</scope>
</reference>
<protein>
    <recommendedName>
        <fullName>Putative transmembrane protein ORF346</fullName>
    </recommendedName>
</protein>